<name>BCB3_ARATH</name>
<protein>
    <recommendedName>
        <fullName>Uclacyanin-3</fullName>
        <shortName>Uclacyanin-III</shortName>
    </recommendedName>
    <alternativeName>
        <fullName>Blue copper-binding protein III</fullName>
        <shortName>BCB III</shortName>
    </alternativeName>
    <alternativeName>
        <fullName>Phytocyanin 3</fullName>
    </alternativeName>
</protein>
<proteinExistence type="evidence at transcript level"/>
<evidence type="ECO:0000250" key="1"/>
<evidence type="ECO:0000255" key="2"/>
<evidence type="ECO:0000255" key="3">
    <source>
        <dbReference type="PROSITE-ProRule" id="PRU00818"/>
    </source>
</evidence>
<evidence type="ECO:0000256" key="4">
    <source>
        <dbReference type="SAM" id="MobiDB-lite"/>
    </source>
</evidence>
<feature type="signal peptide" evidence="2">
    <location>
        <begin position="1"/>
        <end position="21"/>
    </location>
</feature>
<feature type="chain" id="PRO_0000430148" description="Uclacyanin-3">
    <location>
        <begin position="22"/>
        <end position="198"/>
    </location>
</feature>
<feature type="propeptide" id="PRO_0000430149" description="Removed in mature form" evidence="1">
    <location>
        <begin position="199"/>
        <end position="222"/>
    </location>
</feature>
<feature type="domain" description="Phytocyanin" evidence="3">
    <location>
        <begin position="22"/>
        <end position="120"/>
    </location>
</feature>
<feature type="region of interest" description="Disordered" evidence="4">
    <location>
        <begin position="121"/>
        <end position="198"/>
    </location>
</feature>
<feature type="compositionally biased region" description="Pro residues" evidence="4">
    <location>
        <begin position="125"/>
        <end position="172"/>
    </location>
</feature>
<feature type="compositionally biased region" description="Pro residues" evidence="4">
    <location>
        <begin position="185"/>
        <end position="195"/>
    </location>
</feature>
<feature type="binding site">
    <location>
        <position position="61"/>
    </location>
    <ligand>
        <name>Cu cation</name>
        <dbReference type="ChEBI" id="CHEBI:23378"/>
    </ligand>
</feature>
<feature type="binding site">
    <location>
        <position position="102"/>
    </location>
    <ligand>
        <name>Cu cation</name>
        <dbReference type="ChEBI" id="CHEBI:23378"/>
    </ligand>
</feature>
<feature type="binding site">
    <location>
        <position position="107"/>
    </location>
    <ligand>
        <name>Cu cation</name>
        <dbReference type="ChEBI" id="CHEBI:23378"/>
    </ligand>
</feature>
<feature type="binding site">
    <location>
        <position position="112"/>
    </location>
    <ligand>
        <name>Cu cation</name>
        <dbReference type="ChEBI" id="CHEBI:23378"/>
    </ligand>
</feature>
<feature type="lipid moiety-binding region" description="GPI-anchor amidated asparagine" evidence="2">
    <location>
        <position position="198"/>
    </location>
</feature>
<feature type="disulfide bond" evidence="3">
    <location>
        <begin position="74"/>
        <end position="108"/>
    </location>
</feature>
<keyword id="KW-1003">Cell membrane</keyword>
<keyword id="KW-0186">Copper</keyword>
<keyword id="KW-1015">Disulfide bond</keyword>
<keyword id="KW-0249">Electron transport</keyword>
<keyword id="KW-0325">Glycoprotein</keyword>
<keyword id="KW-0336">GPI-anchor</keyword>
<keyword id="KW-0449">Lipoprotein</keyword>
<keyword id="KW-0472">Membrane</keyword>
<keyword id="KW-0479">Metal-binding</keyword>
<keyword id="KW-1185">Reference proteome</keyword>
<keyword id="KW-0732">Signal</keyword>
<keyword id="KW-0813">Transport</keyword>
<organism>
    <name type="scientific">Arabidopsis thaliana</name>
    <name type="common">Mouse-ear cress</name>
    <dbReference type="NCBI Taxonomy" id="3702"/>
    <lineage>
        <taxon>Eukaryota</taxon>
        <taxon>Viridiplantae</taxon>
        <taxon>Streptophyta</taxon>
        <taxon>Embryophyta</taxon>
        <taxon>Tracheophyta</taxon>
        <taxon>Spermatophyta</taxon>
        <taxon>Magnoliopsida</taxon>
        <taxon>eudicotyledons</taxon>
        <taxon>Gunneridae</taxon>
        <taxon>Pentapetalae</taxon>
        <taxon>rosids</taxon>
        <taxon>malvids</taxon>
        <taxon>Brassicales</taxon>
        <taxon>Brassicaceae</taxon>
        <taxon>Camelineae</taxon>
        <taxon>Arabidopsis</taxon>
    </lineage>
</organism>
<comment type="function">
    <text evidence="1">Probably acts as an electron carrier involved in oxygen activation and/or lignin formation.</text>
</comment>
<comment type="subcellular location">
    <subcellularLocation>
        <location evidence="1">Cell membrane</location>
        <topology evidence="1">Lipid-anchor</topology>
        <topology evidence="1">GPI-like-anchor</topology>
    </subcellularLocation>
</comment>
<accession>Q96316</accession>
<sequence length="222" mass="22521">MGSTVAAALLLFLAAVPAVFAATFKVGDISGWTSNLDYTVWLTGKTFRVGDTLEFVYGLSHSVSVVDKAGYDNCDSSGATQNFADGDTKIDLTTVGTMHFLCPTFGHCKNGMKLAVPVLAAAPSPSTPSSPPSTPSTPSSPPSTPSTPSSPPSPPSPPSPSLPPSSLPPSASPPTNGTPDSETLTPPPAPLPPSLSPNAASKGVMSYGIIGVTMILMYAVMT</sequence>
<dbReference type="EMBL" id="AF039404">
    <property type="protein sequence ID" value="AAC32461.1"/>
    <property type="molecule type" value="mRNA"/>
</dbReference>
<dbReference type="EMBL" id="U65650">
    <property type="protein sequence ID" value="AAB07009.1"/>
    <property type="molecule type" value="mRNA"/>
</dbReference>
<dbReference type="EMBL" id="AL163852">
    <property type="protein sequence ID" value="CAB87865.1"/>
    <property type="molecule type" value="Genomic_DNA"/>
</dbReference>
<dbReference type="EMBL" id="CP002686">
    <property type="protein sequence ID" value="AEE80037.1"/>
    <property type="molecule type" value="Genomic_DNA"/>
</dbReference>
<dbReference type="EMBL" id="BT025287">
    <property type="protein sequence ID" value="ABF19040.1"/>
    <property type="molecule type" value="mRNA"/>
</dbReference>
<dbReference type="PIR" id="T49223">
    <property type="entry name" value="T49223"/>
</dbReference>
<dbReference type="RefSeq" id="NP_191587.1">
    <property type="nucleotide sequence ID" value="NM_115892.4"/>
</dbReference>
<dbReference type="SMR" id="Q96316"/>
<dbReference type="STRING" id="3702.Q96316"/>
<dbReference type="GlyGen" id="Q96316">
    <property type="glycosylation" value="5 sites"/>
</dbReference>
<dbReference type="iPTMnet" id="Q96316"/>
<dbReference type="MetOSite" id="Q96316"/>
<dbReference type="PaxDb" id="3702-AT3G60280.1"/>
<dbReference type="ProteomicsDB" id="240748"/>
<dbReference type="EnsemblPlants" id="AT3G60280.1">
    <property type="protein sequence ID" value="AT3G60280.1"/>
    <property type="gene ID" value="AT3G60280"/>
</dbReference>
<dbReference type="GeneID" id="825199"/>
<dbReference type="Gramene" id="AT3G60280.1">
    <property type="protein sequence ID" value="AT3G60280.1"/>
    <property type="gene ID" value="AT3G60280"/>
</dbReference>
<dbReference type="KEGG" id="ath:AT3G60280"/>
<dbReference type="Araport" id="AT3G60280"/>
<dbReference type="TAIR" id="AT3G60280">
    <property type="gene designation" value="UCC3"/>
</dbReference>
<dbReference type="eggNOG" id="ENOG502S1ER">
    <property type="taxonomic scope" value="Eukaryota"/>
</dbReference>
<dbReference type="HOGENOM" id="CLU_058719_2_1_1"/>
<dbReference type="InParanoid" id="Q96316"/>
<dbReference type="OMA" id="IDYTTWV"/>
<dbReference type="PRO" id="PR:Q96316"/>
<dbReference type="Proteomes" id="UP000006548">
    <property type="component" value="Chromosome 3"/>
</dbReference>
<dbReference type="ExpressionAtlas" id="Q96316">
    <property type="expression patterns" value="baseline and differential"/>
</dbReference>
<dbReference type="GO" id="GO:0005886">
    <property type="term" value="C:plasma membrane"/>
    <property type="evidence" value="ECO:0007669"/>
    <property type="project" value="UniProtKB-SubCell"/>
</dbReference>
<dbReference type="GO" id="GO:0098552">
    <property type="term" value="C:side of membrane"/>
    <property type="evidence" value="ECO:0007669"/>
    <property type="project" value="UniProtKB-KW"/>
</dbReference>
<dbReference type="GO" id="GO:0009055">
    <property type="term" value="F:electron transfer activity"/>
    <property type="evidence" value="ECO:0007669"/>
    <property type="project" value="InterPro"/>
</dbReference>
<dbReference type="GO" id="GO:0046872">
    <property type="term" value="F:metal ion binding"/>
    <property type="evidence" value="ECO:0007669"/>
    <property type="project" value="UniProtKB-KW"/>
</dbReference>
<dbReference type="CDD" id="cd04216">
    <property type="entry name" value="Phytocyanin"/>
    <property type="match status" value="1"/>
</dbReference>
<dbReference type="FunFam" id="2.60.40.420:FF:000003">
    <property type="entry name" value="Blue copper"/>
    <property type="match status" value="1"/>
</dbReference>
<dbReference type="Gene3D" id="2.60.40.420">
    <property type="entry name" value="Cupredoxins - blue copper proteins"/>
    <property type="match status" value="1"/>
</dbReference>
<dbReference type="InterPro" id="IPR008972">
    <property type="entry name" value="Cupredoxin"/>
</dbReference>
<dbReference type="InterPro" id="IPR039391">
    <property type="entry name" value="Phytocyanin-like"/>
</dbReference>
<dbReference type="InterPro" id="IPR003245">
    <property type="entry name" value="Phytocyanin_dom"/>
</dbReference>
<dbReference type="PANTHER" id="PTHR33021">
    <property type="entry name" value="BLUE COPPER PROTEIN"/>
    <property type="match status" value="1"/>
</dbReference>
<dbReference type="PANTHER" id="PTHR33021:SF434">
    <property type="entry name" value="CUPREDOXIN SUPERFAMILY PROTEIN-RELATED"/>
    <property type="match status" value="1"/>
</dbReference>
<dbReference type="Pfam" id="PF02298">
    <property type="entry name" value="Cu_bind_like"/>
    <property type="match status" value="1"/>
</dbReference>
<dbReference type="SUPFAM" id="SSF49503">
    <property type="entry name" value="Cupredoxins"/>
    <property type="match status" value="1"/>
</dbReference>
<dbReference type="PROSITE" id="PS51485">
    <property type="entry name" value="PHYTOCYANIN"/>
    <property type="match status" value="1"/>
</dbReference>
<reference key="1">
    <citation type="journal article" date="1998" name="Protein Sci.">
        <title>Uclacyanins, stellacyanins, and plantacyanins are distinct subfamilies of phytocyanins: plant-specific mononuclear blue copper proteins.</title>
        <authorList>
            <person name="Nersissian A.M."/>
            <person name="Immoos C."/>
            <person name="Hill M.G."/>
            <person name="Hart P.J."/>
            <person name="Williams G."/>
            <person name="Herrmann R.G."/>
            <person name="Valentine J.S."/>
        </authorList>
    </citation>
    <scope>NUCLEOTIDE SEQUENCE [MRNA]</scope>
    <scope>GENE FAMILY</scope>
    <scope>NOMENCLATURE</scope>
</reference>
<reference key="2">
    <citation type="submission" date="1996-07" db="EMBL/GenBank/DDBJ databases">
        <title>Isolation of blue copper-binding protein III cDNA in Arabidopsis thaliana.</title>
        <authorList>
            <person name="Kim C.H."/>
            <person name="Cho Y.H."/>
            <person name="Hong Y.-N."/>
        </authorList>
    </citation>
    <scope>NUCLEOTIDE SEQUENCE [MRNA]</scope>
    <source>
        <strain>cv. Columbia</strain>
    </source>
</reference>
<reference key="3">
    <citation type="journal article" date="2000" name="Nature">
        <title>Sequence and analysis of chromosome 3 of the plant Arabidopsis thaliana.</title>
        <authorList>
            <person name="Salanoubat M."/>
            <person name="Lemcke K."/>
            <person name="Rieger M."/>
            <person name="Ansorge W."/>
            <person name="Unseld M."/>
            <person name="Fartmann B."/>
            <person name="Valle G."/>
            <person name="Bloecker H."/>
            <person name="Perez-Alonso M."/>
            <person name="Obermaier B."/>
            <person name="Delseny M."/>
            <person name="Boutry M."/>
            <person name="Grivell L.A."/>
            <person name="Mache R."/>
            <person name="Puigdomenech P."/>
            <person name="De Simone V."/>
            <person name="Choisne N."/>
            <person name="Artiguenave F."/>
            <person name="Robert C."/>
            <person name="Brottier P."/>
            <person name="Wincker P."/>
            <person name="Cattolico L."/>
            <person name="Weissenbach J."/>
            <person name="Saurin W."/>
            <person name="Quetier F."/>
            <person name="Schaefer M."/>
            <person name="Mueller-Auer S."/>
            <person name="Gabel C."/>
            <person name="Fuchs M."/>
            <person name="Benes V."/>
            <person name="Wurmbach E."/>
            <person name="Drzonek H."/>
            <person name="Erfle H."/>
            <person name="Jordan N."/>
            <person name="Bangert S."/>
            <person name="Wiedelmann R."/>
            <person name="Kranz H."/>
            <person name="Voss H."/>
            <person name="Holland R."/>
            <person name="Brandt P."/>
            <person name="Nyakatura G."/>
            <person name="Vezzi A."/>
            <person name="D'Angelo M."/>
            <person name="Pallavicini A."/>
            <person name="Toppo S."/>
            <person name="Simionati B."/>
            <person name="Conrad A."/>
            <person name="Hornischer K."/>
            <person name="Kauer G."/>
            <person name="Loehnert T.-H."/>
            <person name="Nordsiek G."/>
            <person name="Reichelt J."/>
            <person name="Scharfe M."/>
            <person name="Schoen O."/>
            <person name="Bargues M."/>
            <person name="Terol J."/>
            <person name="Climent J."/>
            <person name="Navarro P."/>
            <person name="Collado C."/>
            <person name="Perez-Perez A."/>
            <person name="Ottenwaelder B."/>
            <person name="Duchemin D."/>
            <person name="Cooke R."/>
            <person name="Laudie M."/>
            <person name="Berger-Llauro C."/>
            <person name="Purnelle B."/>
            <person name="Masuy D."/>
            <person name="de Haan M."/>
            <person name="Maarse A.C."/>
            <person name="Alcaraz J.-P."/>
            <person name="Cottet A."/>
            <person name="Casacuberta E."/>
            <person name="Monfort A."/>
            <person name="Argiriou A."/>
            <person name="Flores M."/>
            <person name="Liguori R."/>
            <person name="Vitale D."/>
            <person name="Mannhaupt G."/>
            <person name="Haase D."/>
            <person name="Schoof H."/>
            <person name="Rudd S."/>
            <person name="Zaccaria P."/>
            <person name="Mewes H.-W."/>
            <person name="Mayer K.F.X."/>
            <person name="Kaul S."/>
            <person name="Town C.D."/>
            <person name="Koo H.L."/>
            <person name="Tallon L.J."/>
            <person name="Jenkins J."/>
            <person name="Rooney T."/>
            <person name="Rizzo M."/>
            <person name="Walts A."/>
            <person name="Utterback T."/>
            <person name="Fujii C.Y."/>
            <person name="Shea T.P."/>
            <person name="Creasy T.H."/>
            <person name="Haas B."/>
            <person name="Maiti R."/>
            <person name="Wu D."/>
            <person name="Peterson J."/>
            <person name="Van Aken S."/>
            <person name="Pai G."/>
            <person name="Militscher J."/>
            <person name="Sellers P."/>
            <person name="Gill J.E."/>
            <person name="Feldblyum T.V."/>
            <person name="Preuss D."/>
            <person name="Lin X."/>
            <person name="Nierman W.C."/>
            <person name="Salzberg S.L."/>
            <person name="White O."/>
            <person name="Venter J.C."/>
            <person name="Fraser C.M."/>
            <person name="Kaneko T."/>
            <person name="Nakamura Y."/>
            <person name="Sato S."/>
            <person name="Kato T."/>
            <person name="Asamizu E."/>
            <person name="Sasamoto S."/>
            <person name="Kimura T."/>
            <person name="Idesawa K."/>
            <person name="Kawashima K."/>
            <person name="Kishida Y."/>
            <person name="Kiyokawa C."/>
            <person name="Kohara M."/>
            <person name="Matsumoto M."/>
            <person name="Matsuno A."/>
            <person name="Muraki A."/>
            <person name="Nakayama S."/>
            <person name="Nakazaki N."/>
            <person name="Shinpo S."/>
            <person name="Takeuchi C."/>
            <person name="Wada T."/>
            <person name="Watanabe A."/>
            <person name="Yamada M."/>
            <person name="Yasuda M."/>
            <person name="Tabata S."/>
        </authorList>
    </citation>
    <scope>NUCLEOTIDE SEQUENCE [LARGE SCALE GENOMIC DNA]</scope>
    <source>
        <strain>cv. Columbia</strain>
    </source>
</reference>
<reference key="4">
    <citation type="journal article" date="2017" name="Plant J.">
        <title>Araport11: a complete reannotation of the Arabidopsis thaliana reference genome.</title>
        <authorList>
            <person name="Cheng C.Y."/>
            <person name="Krishnakumar V."/>
            <person name="Chan A.P."/>
            <person name="Thibaud-Nissen F."/>
            <person name="Schobel S."/>
            <person name="Town C.D."/>
        </authorList>
    </citation>
    <scope>GENOME REANNOTATION</scope>
    <source>
        <strain>cv. Columbia</strain>
    </source>
</reference>
<reference key="5">
    <citation type="submission" date="2006-04" db="EMBL/GenBank/DDBJ databases">
        <title>Arabidopsis ORF clones.</title>
        <authorList>
            <person name="Shinn P."/>
            <person name="Chen H."/>
            <person name="Kim C.J."/>
            <person name="Ecker J.R."/>
        </authorList>
    </citation>
    <scope>NUCLEOTIDE SEQUENCE [LARGE SCALE MRNA]</scope>
    <source>
        <strain>cv. Columbia</strain>
    </source>
</reference>
<gene>
    <name type="primary">UCC3</name>
    <name type="ordered locus">At3g60280</name>
    <name type="ORF">F27H5.70</name>
</gene>